<comment type="function">
    <text evidence="1">One of the essential components for the initiation of protein synthesis. Protects formylmethionyl-tRNA from spontaneous hydrolysis and promotes its binding to the 30S ribosomal subunits. Also involved in the hydrolysis of GTP during the formation of the 70S ribosomal complex (By similarity).</text>
</comment>
<comment type="subcellular location">
    <subcellularLocation>
        <location>Plastid</location>
        <location>Chloroplast</location>
    </subcellularLocation>
</comment>
<comment type="similarity">
    <text evidence="3">Belongs to the TRAFAC class translation factor GTPase superfamily. Classic translation factor GTPase family. IF-2 subfamily.</text>
</comment>
<proteinExistence type="inferred from homology"/>
<dbReference type="EMBL" id="EF508371">
    <property type="protein sequence ID" value="ABO70809.1"/>
    <property type="molecule type" value="Genomic_DNA"/>
</dbReference>
<dbReference type="RefSeq" id="YP_001293557.1">
    <property type="nucleotide sequence ID" value="NC_009573.1"/>
</dbReference>
<dbReference type="SMR" id="A6MVX8"/>
<dbReference type="GeneID" id="5228605"/>
<dbReference type="GO" id="GO:0009507">
    <property type="term" value="C:chloroplast"/>
    <property type="evidence" value="ECO:0007669"/>
    <property type="project" value="UniProtKB-SubCell"/>
</dbReference>
<dbReference type="GO" id="GO:0005829">
    <property type="term" value="C:cytosol"/>
    <property type="evidence" value="ECO:0007669"/>
    <property type="project" value="TreeGrafter"/>
</dbReference>
<dbReference type="GO" id="GO:0005525">
    <property type="term" value="F:GTP binding"/>
    <property type="evidence" value="ECO:0007669"/>
    <property type="project" value="UniProtKB-KW"/>
</dbReference>
<dbReference type="GO" id="GO:0003924">
    <property type="term" value="F:GTPase activity"/>
    <property type="evidence" value="ECO:0007669"/>
    <property type="project" value="UniProtKB-UniRule"/>
</dbReference>
<dbReference type="GO" id="GO:0003743">
    <property type="term" value="F:translation initiation factor activity"/>
    <property type="evidence" value="ECO:0007669"/>
    <property type="project" value="UniProtKB-UniRule"/>
</dbReference>
<dbReference type="CDD" id="cd01887">
    <property type="entry name" value="IF2_eIF5B"/>
    <property type="match status" value="1"/>
</dbReference>
<dbReference type="CDD" id="cd03702">
    <property type="entry name" value="IF2_mtIF2_II"/>
    <property type="match status" value="1"/>
</dbReference>
<dbReference type="CDD" id="cd03692">
    <property type="entry name" value="mtIF2_IVc"/>
    <property type="match status" value="1"/>
</dbReference>
<dbReference type="FunFam" id="2.40.30.10:FF:000008">
    <property type="entry name" value="Translation initiation factor IF-2"/>
    <property type="match status" value="1"/>
</dbReference>
<dbReference type="FunFam" id="2.40.30.10:FF:000054">
    <property type="entry name" value="Translation initiation factor IF-2"/>
    <property type="match status" value="1"/>
</dbReference>
<dbReference type="FunFam" id="3.40.50.10050:FF:000001">
    <property type="entry name" value="Translation initiation factor IF-2"/>
    <property type="match status" value="1"/>
</dbReference>
<dbReference type="FunFam" id="3.40.50.300:FF:000019">
    <property type="entry name" value="Translation initiation factor IF-2"/>
    <property type="match status" value="1"/>
</dbReference>
<dbReference type="Gene3D" id="3.40.50.300">
    <property type="entry name" value="P-loop containing nucleotide triphosphate hydrolases"/>
    <property type="match status" value="1"/>
</dbReference>
<dbReference type="Gene3D" id="2.40.30.10">
    <property type="entry name" value="Translation factors"/>
    <property type="match status" value="2"/>
</dbReference>
<dbReference type="Gene3D" id="3.40.50.10050">
    <property type="entry name" value="Translation initiation factor IF- 2, domain 3"/>
    <property type="match status" value="1"/>
</dbReference>
<dbReference type="HAMAP" id="MF_00100_B">
    <property type="entry name" value="IF_2_B"/>
    <property type="match status" value="1"/>
</dbReference>
<dbReference type="InterPro" id="IPR053905">
    <property type="entry name" value="EF-G-like_DII"/>
</dbReference>
<dbReference type="InterPro" id="IPR044145">
    <property type="entry name" value="IF2_II"/>
</dbReference>
<dbReference type="InterPro" id="IPR006847">
    <property type="entry name" value="IF2_N"/>
</dbReference>
<dbReference type="InterPro" id="IPR027417">
    <property type="entry name" value="P-loop_NTPase"/>
</dbReference>
<dbReference type="InterPro" id="IPR005225">
    <property type="entry name" value="Small_GTP-bd"/>
</dbReference>
<dbReference type="InterPro" id="IPR000795">
    <property type="entry name" value="T_Tr_GTP-bd_dom"/>
</dbReference>
<dbReference type="InterPro" id="IPR000178">
    <property type="entry name" value="TF_IF2_bacterial-like"/>
</dbReference>
<dbReference type="InterPro" id="IPR015760">
    <property type="entry name" value="TIF_IF2"/>
</dbReference>
<dbReference type="InterPro" id="IPR023115">
    <property type="entry name" value="TIF_IF2_dom3"/>
</dbReference>
<dbReference type="InterPro" id="IPR036925">
    <property type="entry name" value="TIF_IF2_dom3_sf"/>
</dbReference>
<dbReference type="InterPro" id="IPR009000">
    <property type="entry name" value="Transl_B-barrel_sf"/>
</dbReference>
<dbReference type="NCBIfam" id="TIGR00487">
    <property type="entry name" value="IF-2"/>
    <property type="match status" value="1"/>
</dbReference>
<dbReference type="NCBIfam" id="TIGR00231">
    <property type="entry name" value="small_GTP"/>
    <property type="match status" value="1"/>
</dbReference>
<dbReference type="PANTHER" id="PTHR43381:SF5">
    <property type="entry name" value="TR-TYPE G DOMAIN-CONTAINING PROTEIN"/>
    <property type="match status" value="1"/>
</dbReference>
<dbReference type="PANTHER" id="PTHR43381">
    <property type="entry name" value="TRANSLATION INITIATION FACTOR IF-2-RELATED"/>
    <property type="match status" value="1"/>
</dbReference>
<dbReference type="Pfam" id="PF22042">
    <property type="entry name" value="EF-G_D2"/>
    <property type="match status" value="1"/>
</dbReference>
<dbReference type="Pfam" id="PF00009">
    <property type="entry name" value="GTP_EFTU"/>
    <property type="match status" value="1"/>
</dbReference>
<dbReference type="Pfam" id="PF11987">
    <property type="entry name" value="IF-2"/>
    <property type="match status" value="1"/>
</dbReference>
<dbReference type="Pfam" id="PF04760">
    <property type="entry name" value="IF2_N"/>
    <property type="match status" value="1"/>
</dbReference>
<dbReference type="PRINTS" id="PR00315">
    <property type="entry name" value="ELONGATNFCT"/>
</dbReference>
<dbReference type="SUPFAM" id="SSF52156">
    <property type="entry name" value="Initiation factor IF2/eIF5b, domain 3"/>
    <property type="match status" value="1"/>
</dbReference>
<dbReference type="SUPFAM" id="SSF52540">
    <property type="entry name" value="P-loop containing nucleoside triphosphate hydrolases"/>
    <property type="match status" value="1"/>
</dbReference>
<dbReference type="SUPFAM" id="SSF50447">
    <property type="entry name" value="Translation proteins"/>
    <property type="match status" value="2"/>
</dbReference>
<dbReference type="PROSITE" id="PS51722">
    <property type="entry name" value="G_TR_2"/>
    <property type="match status" value="1"/>
</dbReference>
<gene>
    <name type="primary">infB</name>
</gene>
<sequence length="751" mass="83013">MNNNIAISKENTIKLSFPLVFDTKTTNTSTKEYVETIKEDEKVDLFDPTIDTKLFVKPDRKTKKNDKSDQRDSDIDIIKTKLKSKKKEKSKFRKDEDYDSLKREDNQSPQGAMSSLPFARPEVPAKKMVSNTNTLNKKNVVKSSTKKSKKQTSAKNRELEQNLLVKPENVVIAGPLSVQELAVLLTVSETEIIRSLFLKGIGVTINQILDVSTAKTVGEDLGINIDHVKDSDEESKKLQIHEIDNESLEKRPPVIAIMGHVDHGKTTLLDKIRKTQIAQKEAGGITQKIGAYEVEIDYKDQTKKLTFLDTPGHEAFSGMRSRGVQVTDIAILVVAADDGVKPQTVEAIKYIQAANVPIIVAINKIDKENADIENIKQQLTQYNLIPENWGGDTLMVPISAMKGTNMENLLEMIILVSEIEDLKANTKVKAQGTVLEAHLDRTKGAVATLLVQNGTLRIGDILTAGTSMAKIRGMINSLGEKIEECLPSSPVLIWGLSKLPASGEHFEIFDDEKQAKIAVQKAQEANKENQTIANTISENYTLSNSNTKGVINLIIKTDIQGSAEAIIGSINKIPQDKVQVRVLYASAGEITETDIDFADTSGAIVLAFNTSLATGASKAARHLNVKVKEYDVIYDLLDYIELTIEEITGPEYDKKSLGKAIVQGVFPLAKSFVAGLRVTEGKITKNAHIEVIRQDLVVFDGSITSLKKVKEDIGEAIEDSECGLFVEEFDTWQENDIVQAFELIPKKRKEK</sequence>
<keyword id="KW-0150">Chloroplast</keyword>
<keyword id="KW-0342">GTP-binding</keyword>
<keyword id="KW-0396">Initiation factor</keyword>
<keyword id="KW-0547">Nucleotide-binding</keyword>
<keyword id="KW-0934">Plastid</keyword>
<keyword id="KW-0648">Protein biosynthesis</keyword>
<protein>
    <recommendedName>
        <fullName>Translation initiation factor IF-2, chloroplastic</fullName>
    </recommendedName>
</protein>
<reference key="1">
    <citation type="journal article" date="2007" name="Mol. Biol. Evol.">
        <title>Plastid genome sequence of the cryptophyte alga Rhodomonas salina CCMP1319: lateral transfer of putative DNA replication machinery and a test of chromist plastid phylogeny.</title>
        <authorList>
            <person name="Khan H."/>
            <person name="Parks N."/>
            <person name="Kozera C."/>
            <person name="Curtis B.A."/>
            <person name="Parsons B.J."/>
            <person name="Bowman S."/>
            <person name="Archibald J.M."/>
        </authorList>
    </citation>
    <scope>NUCLEOTIDE SEQUENCE [LARGE SCALE GENOMIC DNA]</scope>
    <source>
        <strain>CCMP1319 / NEPCC76 / CS-174</strain>
    </source>
</reference>
<name>IF2C_RHDSA</name>
<feature type="chain" id="PRO_0000335538" description="Translation initiation factor IF-2, chloroplastic">
    <location>
        <begin position="1"/>
        <end position="751"/>
    </location>
</feature>
<feature type="domain" description="tr-type G">
    <location>
        <begin position="250"/>
        <end position="423"/>
    </location>
</feature>
<feature type="region of interest" description="Disordered" evidence="2">
    <location>
        <begin position="86"/>
        <end position="156"/>
    </location>
</feature>
<feature type="region of interest" description="G1" evidence="1">
    <location>
        <begin position="259"/>
        <end position="266"/>
    </location>
</feature>
<feature type="region of interest" description="G2" evidence="1">
    <location>
        <begin position="284"/>
        <end position="288"/>
    </location>
</feature>
<feature type="region of interest" description="G3" evidence="1">
    <location>
        <begin position="309"/>
        <end position="312"/>
    </location>
</feature>
<feature type="region of interest" description="G4" evidence="1">
    <location>
        <begin position="363"/>
        <end position="366"/>
    </location>
</feature>
<feature type="region of interest" description="G5" evidence="1">
    <location>
        <begin position="399"/>
        <end position="401"/>
    </location>
</feature>
<feature type="compositionally biased region" description="Basic and acidic residues" evidence="2">
    <location>
        <begin position="93"/>
        <end position="106"/>
    </location>
</feature>
<feature type="compositionally biased region" description="Low complexity" evidence="2">
    <location>
        <begin position="129"/>
        <end position="143"/>
    </location>
</feature>
<feature type="binding site" evidence="1">
    <location>
        <begin position="259"/>
        <end position="266"/>
    </location>
    <ligand>
        <name>GTP</name>
        <dbReference type="ChEBI" id="CHEBI:37565"/>
    </ligand>
</feature>
<feature type="binding site" evidence="1">
    <location>
        <begin position="309"/>
        <end position="313"/>
    </location>
    <ligand>
        <name>GTP</name>
        <dbReference type="ChEBI" id="CHEBI:37565"/>
    </ligand>
</feature>
<feature type="binding site" evidence="1">
    <location>
        <begin position="363"/>
        <end position="366"/>
    </location>
    <ligand>
        <name>GTP</name>
        <dbReference type="ChEBI" id="CHEBI:37565"/>
    </ligand>
</feature>
<accession>A6MVX8</accession>
<organism>
    <name type="scientific">Rhodomonas salina</name>
    <name type="common">Cryptomonas salina</name>
    <dbReference type="NCBI Taxonomy" id="52970"/>
    <lineage>
        <taxon>Eukaryota</taxon>
        <taxon>Cryptophyceae</taxon>
        <taxon>Pyrenomonadales</taxon>
        <taxon>Pyrenomonadaceae</taxon>
        <taxon>Rhodomonas</taxon>
    </lineage>
</organism>
<geneLocation type="chloroplast"/>
<evidence type="ECO:0000250" key="1"/>
<evidence type="ECO:0000256" key="2">
    <source>
        <dbReference type="SAM" id="MobiDB-lite"/>
    </source>
</evidence>
<evidence type="ECO:0000305" key="3"/>